<protein>
    <recommendedName>
        <fullName evidence="1">NADH-quinone oxidoreductase subunit H</fullName>
        <ecNumber evidence="1">7.1.1.-</ecNumber>
    </recommendedName>
    <alternativeName>
        <fullName evidence="1">NADH dehydrogenase I subunit H</fullName>
    </alternativeName>
    <alternativeName>
        <fullName evidence="1">NDH-1 subunit H</fullName>
    </alternativeName>
</protein>
<reference key="1">
    <citation type="submission" date="2007-06" db="EMBL/GenBank/DDBJ databases">
        <authorList>
            <person name="Dodson R.J."/>
            <person name="Harkins D."/>
            <person name="Paulsen I.T."/>
        </authorList>
    </citation>
    <scope>NUCLEOTIDE SEQUENCE [LARGE SCALE GENOMIC DNA]</scope>
    <source>
        <strain>DSM 24068 / PA7</strain>
    </source>
</reference>
<sequence>MSWLTPALVTIILTVVKAIVVLLAVVICGALLSWVERRLLGLWQDRYGPNRVGPFGAFQLGADMIKMFFKEDWTPPFADKMIFTLAPVIAMGALLVAFAIVPITPTWGVADLNIGILFFFAMAGLTVYAVLFAGWSSNNKFALLGSLRASAQTISYEVFLALSLMGIVAQVGSFNMRDIVQYQIDNVWFIIPQFFGFCTFIIAGVAVTHRHPFDQPEAEQELADGYHIEYAGMKWGMFFVGEYIGIVLVSALLATLFFGGWHGPFLDTLPWLSFFYFAAKTGFFIMLFILIRASLPRPRYDQVMAFSWKVCLPLTLINLLVTGALVLAAAQ</sequence>
<gene>
    <name evidence="1" type="primary">nuoH</name>
    <name type="ordered locus">PSPA7_2563</name>
</gene>
<accession>A6V4E2</accession>
<keyword id="KW-0997">Cell inner membrane</keyword>
<keyword id="KW-1003">Cell membrane</keyword>
<keyword id="KW-0472">Membrane</keyword>
<keyword id="KW-0520">NAD</keyword>
<keyword id="KW-0874">Quinone</keyword>
<keyword id="KW-1278">Translocase</keyword>
<keyword id="KW-0812">Transmembrane</keyword>
<keyword id="KW-1133">Transmembrane helix</keyword>
<keyword id="KW-0830">Ubiquinone</keyword>
<proteinExistence type="inferred from homology"/>
<name>NUOH_PSEP7</name>
<evidence type="ECO:0000255" key="1">
    <source>
        <dbReference type="HAMAP-Rule" id="MF_01350"/>
    </source>
</evidence>
<comment type="function">
    <text evidence="1">NDH-1 shuttles electrons from NADH, via FMN and iron-sulfur (Fe-S) centers, to quinones in the respiratory chain. The immediate electron acceptor for the enzyme in this species is believed to be ubiquinone. Couples the redox reaction to proton translocation (for every two electrons transferred, four hydrogen ions are translocated across the cytoplasmic membrane), and thus conserves the redox energy in a proton gradient. This subunit may bind ubiquinone.</text>
</comment>
<comment type="catalytic activity">
    <reaction evidence="1">
        <text>a quinone + NADH + 5 H(+)(in) = a quinol + NAD(+) + 4 H(+)(out)</text>
        <dbReference type="Rhea" id="RHEA:57888"/>
        <dbReference type="ChEBI" id="CHEBI:15378"/>
        <dbReference type="ChEBI" id="CHEBI:24646"/>
        <dbReference type="ChEBI" id="CHEBI:57540"/>
        <dbReference type="ChEBI" id="CHEBI:57945"/>
        <dbReference type="ChEBI" id="CHEBI:132124"/>
    </reaction>
</comment>
<comment type="subunit">
    <text evidence="1">NDH-1 is composed of 13 different subunits. Subunits NuoA, H, J, K, L, M, N constitute the membrane sector of the complex.</text>
</comment>
<comment type="subcellular location">
    <subcellularLocation>
        <location evidence="1">Cell inner membrane</location>
        <topology evidence="1">Multi-pass membrane protein</topology>
    </subcellularLocation>
</comment>
<comment type="similarity">
    <text evidence="1">Belongs to the complex I subunit 1 family.</text>
</comment>
<dbReference type="EC" id="7.1.1.-" evidence="1"/>
<dbReference type="EMBL" id="CP000744">
    <property type="protein sequence ID" value="ABR85329.1"/>
    <property type="molecule type" value="Genomic_DNA"/>
</dbReference>
<dbReference type="RefSeq" id="WP_003152492.1">
    <property type="nucleotide sequence ID" value="NC_009656.1"/>
</dbReference>
<dbReference type="SMR" id="A6V4E2"/>
<dbReference type="GeneID" id="77220820"/>
<dbReference type="KEGG" id="pap:PSPA7_2563"/>
<dbReference type="HOGENOM" id="CLU_015134_0_1_6"/>
<dbReference type="Proteomes" id="UP000001582">
    <property type="component" value="Chromosome"/>
</dbReference>
<dbReference type="GO" id="GO:0005886">
    <property type="term" value="C:plasma membrane"/>
    <property type="evidence" value="ECO:0007669"/>
    <property type="project" value="UniProtKB-SubCell"/>
</dbReference>
<dbReference type="GO" id="GO:0003954">
    <property type="term" value="F:NADH dehydrogenase activity"/>
    <property type="evidence" value="ECO:0007669"/>
    <property type="project" value="TreeGrafter"/>
</dbReference>
<dbReference type="GO" id="GO:0016655">
    <property type="term" value="F:oxidoreductase activity, acting on NAD(P)H, quinone or similar compound as acceptor"/>
    <property type="evidence" value="ECO:0007669"/>
    <property type="project" value="UniProtKB-UniRule"/>
</dbReference>
<dbReference type="GO" id="GO:0048038">
    <property type="term" value="F:quinone binding"/>
    <property type="evidence" value="ECO:0007669"/>
    <property type="project" value="UniProtKB-KW"/>
</dbReference>
<dbReference type="GO" id="GO:0009060">
    <property type="term" value="P:aerobic respiration"/>
    <property type="evidence" value="ECO:0007669"/>
    <property type="project" value="TreeGrafter"/>
</dbReference>
<dbReference type="HAMAP" id="MF_01350">
    <property type="entry name" value="NDH1_NuoH"/>
    <property type="match status" value="1"/>
</dbReference>
<dbReference type="InterPro" id="IPR001694">
    <property type="entry name" value="NADH_UbQ_OxRdtase_su1/FPO"/>
</dbReference>
<dbReference type="InterPro" id="IPR018086">
    <property type="entry name" value="NADH_UbQ_OxRdtase_su1_CS"/>
</dbReference>
<dbReference type="NCBIfam" id="NF004740">
    <property type="entry name" value="PRK06076.1-1"/>
    <property type="match status" value="1"/>
</dbReference>
<dbReference type="NCBIfam" id="NF004741">
    <property type="entry name" value="PRK06076.1-2"/>
    <property type="match status" value="1"/>
</dbReference>
<dbReference type="PANTHER" id="PTHR11432">
    <property type="entry name" value="NADH DEHYDROGENASE SUBUNIT 1"/>
    <property type="match status" value="1"/>
</dbReference>
<dbReference type="PANTHER" id="PTHR11432:SF3">
    <property type="entry name" value="NADH-UBIQUINONE OXIDOREDUCTASE CHAIN 1"/>
    <property type="match status" value="1"/>
</dbReference>
<dbReference type="Pfam" id="PF00146">
    <property type="entry name" value="NADHdh"/>
    <property type="match status" value="1"/>
</dbReference>
<dbReference type="PROSITE" id="PS00668">
    <property type="entry name" value="COMPLEX1_ND1_2"/>
    <property type="match status" value="1"/>
</dbReference>
<feature type="chain" id="PRO_1000067751" description="NADH-quinone oxidoreductase subunit H">
    <location>
        <begin position="1"/>
        <end position="331"/>
    </location>
</feature>
<feature type="transmembrane region" description="Helical" evidence="1">
    <location>
        <begin position="7"/>
        <end position="27"/>
    </location>
</feature>
<feature type="transmembrane region" description="Helical" evidence="1">
    <location>
        <begin position="81"/>
        <end position="101"/>
    </location>
</feature>
<feature type="transmembrane region" description="Helical" evidence="1">
    <location>
        <begin position="114"/>
        <end position="134"/>
    </location>
</feature>
<feature type="transmembrane region" description="Helical" evidence="1">
    <location>
        <begin position="154"/>
        <end position="174"/>
    </location>
</feature>
<feature type="transmembrane region" description="Helical" evidence="1">
    <location>
        <begin position="187"/>
        <end position="207"/>
    </location>
</feature>
<feature type="transmembrane region" description="Helical" evidence="1">
    <location>
        <begin position="238"/>
        <end position="258"/>
    </location>
</feature>
<feature type="transmembrane region" description="Helical" evidence="1">
    <location>
        <begin position="271"/>
        <end position="291"/>
    </location>
</feature>
<feature type="transmembrane region" description="Helical" evidence="1">
    <location>
        <begin position="310"/>
        <end position="330"/>
    </location>
</feature>
<organism>
    <name type="scientific">Pseudomonas paraeruginosa (strain DSM 24068 / PA7)</name>
    <name type="common">Pseudomonas aeruginosa (strain PA7)</name>
    <dbReference type="NCBI Taxonomy" id="381754"/>
    <lineage>
        <taxon>Bacteria</taxon>
        <taxon>Pseudomonadati</taxon>
        <taxon>Pseudomonadota</taxon>
        <taxon>Gammaproteobacteria</taxon>
        <taxon>Pseudomonadales</taxon>
        <taxon>Pseudomonadaceae</taxon>
        <taxon>Pseudomonas</taxon>
        <taxon>Pseudomonas paraeruginosa</taxon>
    </lineage>
</organism>